<accession>A1JNE0</accession>
<organism>
    <name type="scientific">Yersinia enterocolitica serotype O:8 / biotype 1B (strain NCTC 13174 / 8081)</name>
    <dbReference type="NCBI Taxonomy" id="393305"/>
    <lineage>
        <taxon>Bacteria</taxon>
        <taxon>Pseudomonadati</taxon>
        <taxon>Pseudomonadota</taxon>
        <taxon>Gammaproteobacteria</taxon>
        <taxon>Enterobacterales</taxon>
        <taxon>Yersiniaceae</taxon>
        <taxon>Yersinia</taxon>
    </lineage>
</organism>
<feature type="chain" id="PRO_1000069077" description="Zinc transport protein ZntB">
    <location>
        <begin position="1"/>
        <end position="327"/>
    </location>
</feature>
<feature type="topological domain" description="Cytoplasmic" evidence="1">
    <location>
        <begin position="1"/>
        <end position="271"/>
    </location>
</feature>
<feature type="transmembrane region" description="Helical" evidence="1">
    <location>
        <begin position="272"/>
        <end position="292"/>
    </location>
</feature>
<feature type="topological domain" description="Periplasmic" evidence="1">
    <location>
        <begin position="293"/>
        <end position="300"/>
    </location>
</feature>
<feature type="transmembrane region" description="Helical" evidence="1">
    <location>
        <begin position="301"/>
        <end position="321"/>
    </location>
</feature>
<feature type="topological domain" description="Cytoplasmic" evidence="1">
    <location>
        <begin position="322"/>
        <end position="327"/>
    </location>
</feature>
<keyword id="KW-0997">Cell inner membrane</keyword>
<keyword id="KW-1003">Cell membrane</keyword>
<keyword id="KW-0406">Ion transport</keyword>
<keyword id="KW-0472">Membrane</keyword>
<keyword id="KW-0812">Transmembrane</keyword>
<keyword id="KW-1133">Transmembrane helix</keyword>
<keyword id="KW-0813">Transport</keyword>
<keyword id="KW-0862">Zinc</keyword>
<evidence type="ECO:0000255" key="1">
    <source>
        <dbReference type="HAMAP-Rule" id="MF_01565"/>
    </source>
</evidence>
<dbReference type="EMBL" id="AM286415">
    <property type="protein sequence ID" value="CAL12179.1"/>
    <property type="molecule type" value="Genomic_DNA"/>
</dbReference>
<dbReference type="RefSeq" id="WP_005169583.1">
    <property type="nucleotide sequence ID" value="NC_008800.1"/>
</dbReference>
<dbReference type="RefSeq" id="YP_001006349.1">
    <property type="nucleotide sequence ID" value="NC_008800.1"/>
</dbReference>
<dbReference type="SMR" id="A1JNE0"/>
<dbReference type="KEGG" id="yen:YE2107"/>
<dbReference type="PATRIC" id="fig|393305.7.peg.2270"/>
<dbReference type="eggNOG" id="COG0598">
    <property type="taxonomic scope" value="Bacteria"/>
</dbReference>
<dbReference type="HOGENOM" id="CLU_007127_2_0_6"/>
<dbReference type="OrthoDB" id="9803484at2"/>
<dbReference type="Proteomes" id="UP000000642">
    <property type="component" value="Chromosome"/>
</dbReference>
<dbReference type="GO" id="GO:0005886">
    <property type="term" value="C:plasma membrane"/>
    <property type="evidence" value="ECO:0007669"/>
    <property type="project" value="UniProtKB-SubCell"/>
</dbReference>
<dbReference type="GO" id="GO:0050897">
    <property type="term" value="F:cobalt ion binding"/>
    <property type="evidence" value="ECO:0007669"/>
    <property type="project" value="TreeGrafter"/>
</dbReference>
<dbReference type="GO" id="GO:0015087">
    <property type="term" value="F:cobalt ion transmembrane transporter activity"/>
    <property type="evidence" value="ECO:0007669"/>
    <property type="project" value="TreeGrafter"/>
</dbReference>
<dbReference type="GO" id="GO:0000287">
    <property type="term" value="F:magnesium ion binding"/>
    <property type="evidence" value="ECO:0007669"/>
    <property type="project" value="TreeGrafter"/>
</dbReference>
<dbReference type="GO" id="GO:0015095">
    <property type="term" value="F:magnesium ion transmembrane transporter activity"/>
    <property type="evidence" value="ECO:0007669"/>
    <property type="project" value="TreeGrafter"/>
</dbReference>
<dbReference type="GO" id="GO:0005385">
    <property type="term" value="F:zinc ion transmembrane transporter activity"/>
    <property type="evidence" value="ECO:0007669"/>
    <property type="project" value="UniProtKB-UniRule"/>
</dbReference>
<dbReference type="CDD" id="cd12833">
    <property type="entry name" value="ZntB-like_1"/>
    <property type="match status" value="1"/>
</dbReference>
<dbReference type="Gene3D" id="3.30.460.20">
    <property type="entry name" value="CorA soluble domain-like"/>
    <property type="match status" value="1"/>
</dbReference>
<dbReference type="Gene3D" id="1.20.58.340">
    <property type="entry name" value="Magnesium transport protein CorA, transmembrane region"/>
    <property type="match status" value="2"/>
</dbReference>
<dbReference type="HAMAP" id="MF_01565">
    <property type="entry name" value="ZntB"/>
    <property type="match status" value="1"/>
</dbReference>
<dbReference type="InterPro" id="IPR045861">
    <property type="entry name" value="CorA_cytoplasmic_dom"/>
</dbReference>
<dbReference type="InterPro" id="IPR045863">
    <property type="entry name" value="CorA_TM1_TM2"/>
</dbReference>
<dbReference type="InterPro" id="IPR002523">
    <property type="entry name" value="MgTranspt_CorA/ZnTranspt_ZntB"/>
</dbReference>
<dbReference type="InterPro" id="IPR023714">
    <property type="entry name" value="Zn_transp_ZntB"/>
</dbReference>
<dbReference type="NCBIfam" id="NF007092">
    <property type="entry name" value="PRK09546.1"/>
    <property type="match status" value="1"/>
</dbReference>
<dbReference type="PANTHER" id="PTHR46494">
    <property type="entry name" value="CORA FAMILY METAL ION TRANSPORTER (EUROFUNG)"/>
    <property type="match status" value="1"/>
</dbReference>
<dbReference type="PANTHER" id="PTHR46494:SF3">
    <property type="entry name" value="ZINC TRANSPORT PROTEIN ZNTB"/>
    <property type="match status" value="1"/>
</dbReference>
<dbReference type="Pfam" id="PF01544">
    <property type="entry name" value="CorA"/>
    <property type="match status" value="1"/>
</dbReference>
<dbReference type="SUPFAM" id="SSF143865">
    <property type="entry name" value="CorA soluble domain-like"/>
    <property type="match status" value="1"/>
</dbReference>
<dbReference type="SUPFAM" id="SSF144083">
    <property type="entry name" value="Magnesium transport protein CorA, transmembrane region"/>
    <property type="match status" value="1"/>
</dbReference>
<proteinExistence type="inferred from homology"/>
<name>ZNTB_YERE8</name>
<comment type="function">
    <text evidence="1">Zinc transporter. Acts as a Zn(2+):proton symporter, which likely mediates zinc ion uptake.</text>
</comment>
<comment type="catalytic activity">
    <reaction evidence="1">
        <text>Zn(2+)(out) + H(+)(out) = Zn(2+)(in) + H(+)(in)</text>
        <dbReference type="Rhea" id="RHEA:71195"/>
        <dbReference type="ChEBI" id="CHEBI:15378"/>
        <dbReference type="ChEBI" id="CHEBI:29105"/>
    </reaction>
    <physiologicalReaction direction="left-to-right" evidence="1">
        <dbReference type="Rhea" id="RHEA:71196"/>
    </physiologicalReaction>
</comment>
<comment type="subcellular location">
    <subcellularLocation>
        <location evidence="1">Cell inner membrane</location>
        <topology evidence="1">Multi-pass membrane protein</topology>
    </subcellularLocation>
</comment>
<comment type="similarity">
    <text evidence="1">Belongs to the CorA metal ion transporter (MIT) (TC 1.A.35) family.</text>
</comment>
<gene>
    <name evidence="1" type="primary">zntB</name>
    <name type="ordered locus">YE2107</name>
</gene>
<reference key="1">
    <citation type="journal article" date="2006" name="PLoS Genet.">
        <title>The complete genome sequence and comparative genome analysis of the high pathogenicity Yersinia enterocolitica strain 8081.</title>
        <authorList>
            <person name="Thomson N.R."/>
            <person name="Howard S."/>
            <person name="Wren B.W."/>
            <person name="Holden M.T.G."/>
            <person name="Crossman L."/>
            <person name="Challis G.L."/>
            <person name="Churcher C."/>
            <person name="Mungall K."/>
            <person name="Brooks K."/>
            <person name="Chillingworth T."/>
            <person name="Feltwell T."/>
            <person name="Abdellah Z."/>
            <person name="Hauser H."/>
            <person name="Jagels K."/>
            <person name="Maddison M."/>
            <person name="Moule S."/>
            <person name="Sanders M."/>
            <person name="Whitehead S."/>
            <person name="Quail M.A."/>
            <person name="Dougan G."/>
            <person name="Parkhill J."/>
            <person name="Prentice M.B."/>
        </authorList>
    </citation>
    <scope>NUCLEOTIDE SEQUENCE [LARGE SCALE GENOMIC DNA]</scope>
    <source>
        <strain>NCTC 13174 / 8081</strain>
    </source>
</reference>
<sequence length="327" mass="36541">MDVVAGKALQVSDAVYSYQLDGKGGVTSISPDAVATAEQPCWLHLDYTHPDSAAWLQNTPLLPEVVRDGLAGESVRPKVTRLGDGTMITLRGINFNNDARPDQLVTIRVYMTDKLIVSTRHRKVYSIDDVLNDLQSGTGPTNSGNWLVEIVDGLTDHTSEFIEDLHDKIIDLEDDLLEQKIPARGQMALLRKQLIVLRRYMAPQRDVFSRLASERLPWMNDDDRRRMQEISERLGRGLEDLDSSIARTAVLSDEISSLMADAMNRRTYTMSLLAMVFLPTTFLTGLFGVNLGGIPGNTDSFGFATFCMMLVVLVLGVAWWLKHSKWL</sequence>
<protein>
    <recommendedName>
        <fullName evidence="1">Zinc transport protein ZntB</fullName>
    </recommendedName>
</protein>